<comment type="catalytic activity">
    <reaction evidence="1">
        <text>L-histidinol phosphate + 2-oxoglutarate = 3-(imidazol-4-yl)-2-oxopropyl phosphate + L-glutamate</text>
        <dbReference type="Rhea" id="RHEA:23744"/>
        <dbReference type="ChEBI" id="CHEBI:16810"/>
        <dbReference type="ChEBI" id="CHEBI:29985"/>
        <dbReference type="ChEBI" id="CHEBI:57766"/>
        <dbReference type="ChEBI" id="CHEBI:57980"/>
        <dbReference type="EC" id="2.6.1.9"/>
    </reaction>
</comment>
<comment type="cofactor">
    <cofactor evidence="1">
        <name>pyridoxal 5'-phosphate</name>
        <dbReference type="ChEBI" id="CHEBI:597326"/>
    </cofactor>
</comment>
<comment type="pathway">
    <text evidence="1">Amino-acid biosynthesis; L-histidine biosynthesis; L-histidine from 5-phospho-alpha-D-ribose 1-diphosphate: step 7/9.</text>
</comment>
<comment type="subunit">
    <text evidence="1">Homodimer.</text>
</comment>
<comment type="similarity">
    <text evidence="1">Belongs to the class-II pyridoxal-phosphate-dependent aminotransferase family. Histidinol-phosphate aminotransferase subfamily.</text>
</comment>
<sequence>MTTPSAELPALARIRDDVRAMQAYVVADATGYLKMDAMENPFGLPPALQAALGQRLGQLALNRYPGTRQNDLKAALAAYAGEPAGSAVLLGNGSDELISLVALACARAQATVLAPVPGFVMYAMSAQLQGLGFVGVPLTADFELDEAAMLDAIAQHRPAITFLAYPNNPTATLWDEAVVQRIIDAAGAQGGIVVMDEAYQPFASRSWIERMRAQPERNGHVLLMRTLSKFGLAGVRLGYMIGPAALVAEVDKVRPPYNVSVLNTEAALFALEHADVFAAQADELRAARTELLAALRAMPGIERVWDSQANMVLVRVPDAARAYEGMKARKVLVKNVSTMHPLLAGCLRLTVGSSADNAQMLTALQASL</sequence>
<accession>B9MDV4</accession>
<protein>
    <recommendedName>
        <fullName evidence="1">Histidinol-phosphate aminotransferase</fullName>
        <ecNumber evidence="1">2.6.1.9</ecNumber>
    </recommendedName>
    <alternativeName>
        <fullName evidence="1">Imidazole acetol-phosphate transaminase</fullName>
    </alternativeName>
</protein>
<feature type="chain" id="PRO_1000149093" description="Histidinol-phosphate aminotransferase">
    <location>
        <begin position="1"/>
        <end position="368"/>
    </location>
</feature>
<feature type="modified residue" description="N6-(pyridoxal phosphate)lysine" evidence="1">
    <location>
        <position position="229"/>
    </location>
</feature>
<evidence type="ECO:0000255" key="1">
    <source>
        <dbReference type="HAMAP-Rule" id="MF_01023"/>
    </source>
</evidence>
<gene>
    <name evidence="1" type="primary">hisC</name>
    <name type="ordered locus">Dtpsy_0729</name>
</gene>
<dbReference type="EC" id="2.6.1.9" evidence="1"/>
<dbReference type="EMBL" id="CP001392">
    <property type="protein sequence ID" value="ACM32208.1"/>
    <property type="molecule type" value="Genomic_DNA"/>
</dbReference>
<dbReference type="RefSeq" id="WP_012655719.1">
    <property type="nucleotide sequence ID" value="NC_011992.1"/>
</dbReference>
<dbReference type="SMR" id="B9MDV4"/>
<dbReference type="KEGG" id="dia:Dtpsy_0729"/>
<dbReference type="eggNOG" id="COG0079">
    <property type="taxonomic scope" value="Bacteria"/>
</dbReference>
<dbReference type="HOGENOM" id="CLU_017584_3_1_4"/>
<dbReference type="UniPathway" id="UPA00031">
    <property type="reaction ID" value="UER00012"/>
</dbReference>
<dbReference type="Proteomes" id="UP000000450">
    <property type="component" value="Chromosome"/>
</dbReference>
<dbReference type="GO" id="GO:0004400">
    <property type="term" value="F:histidinol-phosphate transaminase activity"/>
    <property type="evidence" value="ECO:0007669"/>
    <property type="project" value="UniProtKB-UniRule"/>
</dbReference>
<dbReference type="GO" id="GO:0030170">
    <property type="term" value="F:pyridoxal phosphate binding"/>
    <property type="evidence" value="ECO:0007669"/>
    <property type="project" value="InterPro"/>
</dbReference>
<dbReference type="GO" id="GO:0000105">
    <property type="term" value="P:L-histidine biosynthetic process"/>
    <property type="evidence" value="ECO:0007669"/>
    <property type="project" value="UniProtKB-UniRule"/>
</dbReference>
<dbReference type="CDD" id="cd00609">
    <property type="entry name" value="AAT_like"/>
    <property type="match status" value="1"/>
</dbReference>
<dbReference type="Gene3D" id="3.90.1150.10">
    <property type="entry name" value="Aspartate Aminotransferase, domain 1"/>
    <property type="match status" value="1"/>
</dbReference>
<dbReference type="Gene3D" id="3.40.640.10">
    <property type="entry name" value="Type I PLP-dependent aspartate aminotransferase-like (Major domain)"/>
    <property type="match status" value="1"/>
</dbReference>
<dbReference type="HAMAP" id="MF_01023">
    <property type="entry name" value="HisC_aminotrans_2"/>
    <property type="match status" value="1"/>
</dbReference>
<dbReference type="InterPro" id="IPR004839">
    <property type="entry name" value="Aminotransferase_I/II_large"/>
</dbReference>
<dbReference type="InterPro" id="IPR005861">
    <property type="entry name" value="HisP_aminotrans"/>
</dbReference>
<dbReference type="InterPro" id="IPR015424">
    <property type="entry name" value="PyrdxlP-dep_Trfase"/>
</dbReference>
<dbReference type="InterPro" id="IPR015421">
    <property type="entry name" value="PyrdxlP-dep_Trfase_major"/>
</dbReference>
<dbReference type="InterPro" id="IPR015422">
    <property type="entry name" value="PyrdxlP-dep_Trfase_small"/>
</dbReference>
<dbReference type="NCBIfam" id="TIGR01141">
    <property type="entry name" value="hisC"/>
    <property type="match status" value="1"/>
</dbReference>
<dbReference type="PANTHER" id="PTHR42885:SF2">
    <property type="entry name" value="HISTIDINOL-PHOSPHATE AMINOTRANSFERASE"/>
    <property type="match status" value="1"/>
</dbReference>
<dbReference type="PANTHER" id="PTHR42885">
    <property type="entry name" value="HISTIDINOL-PHOSPHATE AMINOTRANSFERASE-RELATED"/>
    <property type="match status" value="1"/>
</dbReference>
<dbReference type="Pfam" id="PF00155">
    <property type="entry name" value="Aminotran_1_2"/>
    <property type="match status" value="1"/>
</dbReference>
<dbReference type="SUPFAM" id="SSF53383">
    <property type="entry name" value="PLP-dependent transferases"/>
    <property type="match status" value="1"/>
</dbReference>
<organism>
    <name type="scientific">Acidovorax ebreus (strain TPSY)</name>
    <name type="common">Diaphorobacter sp. (strain TPSY)</name>
    <dbReference type="NCBI Taxonomy" id="535289"/>
    <lineage>
        <taxon>Bacteria</taxon>
        <taxon>Pseudomonadati</taxon>
        <taxon>Pseudomonadota</taxon>
        <taxon>Betaproteobacteria</taxon>
        <taxon>Burkholderiales</taxon>
        <taxon>Comamonadaceae</taxon>
        <taxon>Diaphorobacter</taxon>
    </lineage>
</organism>
<reference key="1">
    <citation type="submission" date="2009-01" db="EMBL/GenBank/DDBJ databases">
        <title>Complete sequence of Diaphorobacter sp. TPSY.</title>
        <authorList>
            <consortium name="US DOE Joint Genome Institute"/>
            <person name="Lucas S."/>
            <person name="Copeland A."/>
            <person name="Lapidus A."/>
            <person name="Glavina del Rio T."/>
            <person name="Tice H."/>
            <person name="Bruce D."/>
            <person name="Goodwin L."/>
            <person name="Pitluck S."/>
            <person name="Chertkov O."/>
            <person name="Brettin T."/>
            <person name="Detter J.C."/>
            <person name="Han C."/>
            <person name="Larimer F."/>
            <person name="Land M."/>
            <person name="Hauser L."/>
            <person name="Kyrpides N."/>
            <person name="Mikhailova N."/>
            <person name="Coates J.D."/>
        </authorList>
    </citation>
    <scope>NUCLEOTIDE SEQUENCE [LARGE SCALE GENOMIC DNA]</scope>
    <source>
        <strain>TPSY</strain>
    </source>
</reference>
<proteinExistence type="inferred from homology"/>
<keyword id="KW-0028">Amino-acid biosynthesis</keyword>
<keyword id="KW-0032">Aminotransferase</keyword>
<keyword id="KW-0368">Histidine biosynthesis</keyword>
<keyword id="KW-0663">Pyridoxal phosphate</keyword>
<keyword id="KW-1185">Reference proteome</keyword>
<keyword id="KW-0808">Transferase</keyword>
<name>HIS8_ACIET</name>